<keyword id="KW-0067">ATP-binding</keyword>
<keyword id="KW-0418">Kinase</keyword>
<keyword id="KW-0547">Nucleotide-binding</keyword>
<keyword id="KW-1185">Reference proteome</keyword>
<keyword id="KW-0677">Repeat</keyword>
<keyword id="KW-0808">Transferase</keyword>
<sequence>MSKDQSYVLKAWEVTVRKTQQAKKRANSVFGTVSVAPHTDNDTTTDDNDDETTTNRSSLEEFYHAERVLPNGDYYTGQWYDSFPHGHGKYLWTDGCMYIGDWYNGKTMGNGKFGWPSGATYEGEFKSGYMDGIGTYTGPSGDAYKGQWVMNLKHGHGVKSFANGDAYDGEWRRGLQEGQGKYQWSDGSYYIGEWKNGTICGKGSFVWTNGNRYDGFWDEGFPRGNGTFKWDNGSFYVGHWSKDPEEMNGTYYPSGNEGNLEWDPKDLFNNLSEYTICSGERVPTLPSQKKLSVWNSSKRIEKPRRTSVDGRVSVGVDRAFEKMNMWGNEIGEGGADMRKELDAELMRLDAEGLQSLKSSPVPMKLPKAGRKQGETISKGHRNYELMLNLQLGIRHSVGRQAPAASLDLKPSAFDPKDKIWRRFPREGTKYTPPHQSTEFKWKDYCPLVFRSLRKLFKVDPADYMLSICGNDALRELSSPGKSGSFFYLTNDDRYMIKTMKKSETKVLLGMLAAYYNHVRAFENSLVIRFFGLHCVKLNGPTQKKVRFVIMGNLFCSKYSVHRRFDLKGSSLGRTTDKPESEIDSNTILKDLDLNFIFRLQKAWYQEFIRQIDKDCEFLEQERIMDYSLLVGIHFREASVAGELIPSGARTPIGESEEESGPRLSRAEVDELLSDPSRWASIRLGTNMPARAERTMRKNDSELQLVGEPTGEFYEVVMIFGIIDILQDYDISKKLEHAYKSIQYDPSSISAVDPRQYSRRFRDFIFKVFTDDN</sequence>
<organism>
    <name type="scientific">Arabidopsis thaliana</name>
    <name type="common">Mouse-ear cress</name>
    <dbReference type="NCBI Taxonomy" id="3702"/>
    <lineage>
        <taxon>Eukaryota</taxon>
        <taxon>Viridiplantae</taxon>
        <taxon>Streptophyta</taxon>
        <taxon>Embryophyta</taxon>
        <taxon>Tracheophyta</taxon>
        <taxon>Spermatophyta</taxon>
        <taxon>Magnoliopsida</taxon>
        <taxon>eudicotyledons</taxon>
        <taxon>Gunneridae</taxon>
        <taxon>Pentapetalae</taxon>
        <taxon>rosids</taxon>
        <taxon>malvids</taxon>
        <taxon>Brassicales</taxon>
        <taxon>Brassicaceae</taxon>
        <taxon>Camelineae</taxon>
        <taxon>Arabidopsis</taxon>
    </lineage>
</organism>
<evidence type="ECO:0000250" key="1"/>
<evidence type="ECO:0000255" key="2">
    <source>
        <dbReference type="PROSITE-ProRule" id="PRU00781"/>
    </source>
</evidence>
<evidence type="ECO:0000256" key="3">
    <source>
        <dbReference type="SAM" id="MobiDB-lite"/>
    </source>
</evidence>
<name>PI5K5_ARATH</name>
<protein>
    <recommendedName>
        <fullName>Phosphatidylinositol 4-phosphate 5-kinase 5</fullName>
        <shortName>AtPIP5K5</shortName>
        <ecNumber>2.7.1.68</ecNumber>
    </recommendedName>
    <alternativeName>
        <fullName>1-phosphatidylinositol 4-phosphate kinase 5</fullName>
    </alternativeName>
    <alternativeName>
        <fullName>Diphosphoinositide kinase 5</fullName>
    </alternativeName>
    <alternativeName>
        <fullName>PtdIns(4)P-5-kinase 5</fullName>
    </alternativeName>
</protein>
<reference key="1">
    <citation type="submission" date="2000-04" db="EMBL/GenBank/DDBJ databases">
        <title>Cloning and functional analysis of a novel Arabidopsis phosphatidylinositol-4-phosphate 5-kinase.</title>
        <authorList>
            <person name="Abd El-Haliem M."/>
            <person name="Elge S."/>
            <person name="Mueller-Roeber B."/>
        </authorList>
    </citation>
    <scope>NUCLEOTIDE SEQUENCE [MRNA]</scope>
</reference>
<reference key="2">
    <citation type="journal article" date="1999" name="Nature">
        <title>Sequence and analysis of chromosome 2 of the plant Arabidopsis thaliana.</title>
        <authorList>
            <person name="Lin X."/>
            <person name="Kaul S."/>
            <person name="Rounsley S.D."/>
            <person name="Shea T.P."/>
            <person name="Benito M.-I."/>
            <person name="Town C.D."/>
            <person name="Fujii C.Y."/>
            <person name="Mason T.M."/>
            <person name="Bowman C.L."/>
            <person name="Barnstead M.E."/>
            <person name="Feldblyum T.V."/>
            <person name="Buell C.R."/>
            <person name="Ketchum K.A."/>
            <person name="Lee J.J."/>
            <person name="Ronning C.M."/>
            <person name="Koo H.L."/>
            <person name="Moffat K.S."/>
            <person name="Cronin L.A."/>
            <person name="Shen M."/>
            <person name="Pai G."/>
            <person name="Van Aken S."/>
            <person name="Umayam L."/>
            <person name="Tallon L.J."/>
            <person name="Gill J.E."/>
            <person name="Adams M.D."/>
            <person name="Carrera A.J."/>
            <person name="Creasy T.H."/>
            <person name="Goodman H.M."/>
            <person name="Somerville C.R."/>
            <person name="Copenhaver G.P."/>
            <person name="Preuss D."/>
            <person name="Nierman W.C."/>
            <person name="White O."/>
            <person name="Eisen J.A."/>
            <person name="Salzberg S.L."/>
            <person name="Fraser C.M."/>
            <person name="Venter J.C."/>
        </authorList>
    </citation>
    <scope>NUCLEOTIDE SEQUENCE [LARGE SCALE GENOMIC DNA]</scope>
    <source>
        <strain>cv. Columbia</strain>
    </source>
</reference>
<reference key="3">
    <citation type="journal article" date="2017" name="Plant J.">
        <title>Araport11: a complete reannotation of the Arabidopsis thaliana reference genome.</title>
        <authorList>
            <person name="Cheng C.Y."/>
            <person name="Krishnakumar V."/>
            <person name="Chan A.P."/>
            <person name="Thibaud-Nissen F."/>
            <person name="Schobel S."/>
            <person name="Town C.D."/>
        </authorList>
    </citation>
    <scope>GENOME REANNOTATION</scope>
    <source>
        <strain>cv. Columbia</strain>
    </source>
</reference>
<reference key="4">
    <citation type="journal article" date="2002" name="Plant Physiol.">
        <title>Inositol phospholipid metabolism in Arabidopsis. Characterized and putative isoforms of inositol phospholipid kinase and phosphoinositide-specific phospholipase C.</title>
        <authorList>
            <person name="Mueller-Roeber B."/>
            <person name="Pical C."/>
        </authorList>
    </citation>
    <scope>GENE FAMILY</scope>
    <scope>NOMENCLATURE</scope>
</reference>
<feature type="chain" id="PRO_0000185477" description="Phosphatidylinositol 4-phosphate 5-kinase 5">
    <location>
        <begin position="1"/>
        <end position="772"/>
    </location>
</feature>
<feature type="repeat" description="MORN 1">
    <location>
        <begin position="75"/>
        <end position="97"/>
    </location>
</feature>
<feature type="repeat" description="MORN 2">
    <location>
        <begin position="98"/>
        <end position="120"/>
    </location>
</feature>
<feature type="repeat" description="MORN 3">
    <location>
        <begin position="121"/>
        <end position="143"/>
    </location>
</feature>
<feature type="repeat" description="MORN 4">
    <location>
        <begin position="144"/>
        <end position="166"/>
    </location>
</feature>
<feature type="repeat" description="MORN 5">
    <location>
        <begin position="167"/>
        <end position="189"/>
    </location>
</feature>
<feature type="repeat" description="MORN 6">
    <location>
        <begin position="190"/>
        <end position="212"/>
    </location>
</feature>
<feature type="repeat" description="MORN 7">
    <location>
        <begin position="213"/>
        <end position="235"/>
    </location>
</feature>
<feature type="repeat" description="MORN 8">
    <location>
        <begin position="236"/>
        <end position="257"/>
    </location>
</feature>
<feature type="domain" description="PIPK" evidence="2">
    <location>
        <begin position="377"/>
        <end position="768"/>
    </location>
</feature>
<feature type="region of interest" description="Disordered" evidence="3">
    <location>
        <begin position="22"/>
        <end position="56"/>
    </location>
</feature>
<feature type="region of interest" description="Disordered" evidence="3">
    <location>
        <begin position="646"/>
        <end position="665"/>
    </location>
</feature>
<feature type="region of interest" description="Activation loop" evidence="1">
    <location>
        <begin position="728"/>
        <end position="749"/>
    </location>
</feature>
<feature type="compositionally biased region" description="Acidic residues" evidence="3">
    <location>
        <begin position="43"/>
        <end position="52"/>
    </location>
</feature>
<accession>Q9SLG9</accession>
<dbReference type="EC" id="2.7.1.68"/>
<dbReference type="EMBL" id="AF260903">
    <property type="protein sequence ID" value="AAK49397.1"/>
    <property type="molecule type" value="mRNA"/>
</dbReference>
<dbReference type="EMBL" id="AC004261">
    <property type="protein sequence ID" value="AAM14925.1"/>
    <property type="molecule type" value="Genomic_DNA"/>
</dbReference>
<dbReference type="EMBL" id="CP002685">
    <property type="protein sequence ID" value="AEC09944.1"/>
    <property type="molecule type" value="Genomic_DNA"/>
</dbReference>
<dbReference type="PIR" id="T02098">
    <property type="entry name" value="T02098"/>
</dbReference>
<dbReference type="RefSeq" id="NP_181654.1">
    <property type="nucleotide sequence ID" value="NM_129686.2"/>
</dbReference>
<dbReference type="SMR" id="Q9SLG9"/>
<dbReference type="BioGRID" id="4057">
    <property type="interactions" value="3"/>
</dbReference>
<dbReference type="FunCoup" id="Q9SLG9">
    <property type="interactions" value="2553"/>
</dbReference>
<dbReference type="STRING" id="3702.Q9SLG9"/>
<dbReference type="iPTMnet" id="Q9SLG9"/>
<dbReference type="PaxDb" id="3702-AT2G41210.1"/>
<dbReference type="ProteomicsDB" id="236754"/>
<dbReference type="EnsemblPlants" id="AT2G41210.1">
    <property type="protein sequence ID" value="AT2G41210.1"/>
    <property type="gene ID" value="AT2G41210"/>
</dbReference>
<dbReference type="GeneID" id="818720"/>
<dbReference type="Gramene" id="AT2G41210.1">
    <property type="protein sequence ID" value="AT2G41210.1"/>
    <property type="gene ID" value="AT2G41210"/>
</dbReference>
<dbReference type="KEGG" id="ath:AT2G41210"/>
<dbReference type="Araport" id="AT2G41210"/>
<dbReference type="TAIR" id="AT2G41210">
    <property type="gene designation" value="PIP5K5"/>
</dbReference>
<dbReference type="eggNOG" id="KOG0229">
    <property type="taxonomic scope" value="Eukaryota"/>
</dbReference>
<dbReference type="HOGENOM" id="CLU_004312_6_4_1"/>
<dbReference type="InParanoid" id="Q9SLG9"/>
<dbReference type="OMA" id="IFHAERF"/>
<dbReference type="PhylomeDB" id="Q9SLG9"/>
<dbReference type="BioCyc" id="ARA:AT2G41210-MONOMER"/>
<dbReference type="PRO" id="PR:Q9SLG9"/>
<dbReference type="Proteomes" id="UP000006548">
    <property type="component" value="Chromosome 2"/>
</dbReference>
<dbReference type="ExpressionAtlas" id="Q9SLG9">
    <property type="expression patterns" value="baseline and differential"/>
</dbReference>
<dbReference type="GO" id="GO:0016324">
    <property type="term" value="C:apical plasma membrane"/>
    <property type="evidence" value="ECO:0000314"/>
    <property type="project" value="TAIR"/>
</dbReference>
<dbReference type="GO" id="GO:0005829">
    <property type="term" value="C:cytosol"/>
    <property type="evidence" value="ECO:0000314"/>
    <property type="project" value="TAIR"/>
</dbReference>
<dbReference type="GO" id="GO:0090406">
    <property type="term" value="C:pollen tube"/>
    <property type="evidence" value="ECO:0000314"/>
    <property type="project" value="TAIR"/>
</dbReference>
<dbReference type="GO" id="GO:0016308">
    <property type="term" value="F:1-phosphatidylinositol-4-phosphate 5-kinase activity"/>
    <property type="evidence" value="ECO:0000314"/>
    <property type="project" value="TAIR"/>
</dbReference>
<dbReference type="GO" id="GO:0005524">
    <property type="term" value="F:ATP binding"/>
    <property type="evidence" value="ECO:0007669"/>
    <property type="project" value="UniProtKB-KW"/>
</dbReference>
<dbReference type="GO" id="GO:0046488">
    <property type="term" value="P:phosphatidylinositol metabolic process"/>
    <property type="evidence" value="ECO:0000314"/>
    <property type="project" value="TAIR"/>
</dbReference>
<dbReference type="GO" id="GO:0009827">
    <property type="term" value="P:plant-type cell wall modification"/>
    <property type="evidence" value="ECO:0000315"/>
    <property type="project" value="TAIR"/>
</dbReference>
<dbReference type="GO" id="GO:0009846">
    <property type="term" value="P:pollen germination"/>
    <property type="evidence" value="ECO:0000316"/>
    <property type="project" value="TAIR"/>
</dbReference>
<dbReference type="GO" id="GO:0009860">
    <property type="term" value="P:pollen tube growth"/>
    <property type="evidence" value="ECO:0000316"/>
    <property type="project" value="TAIR"/>
</dbReference>
<dbReference type="CDD" id="cd17302">
    <property type="entry name" value="PIPKc_AtPIP5K_like"/>
    <property type="match status" value="1"/>
</dbReference>
<dbReference type="FunFam" id="2.20.110.10:FF:000015">
    <property type="entry name" value="Phosphatidylinositol 4-phosphate 5-kinase"/>
    <property type="match status" value="1"/>
</dbReference>
<dbReference type="FunFam" id="2.20.110.10:FF:000027">
    <property type="entry name" value="Phosphatidylinositol 4-phosphate 5-kinase"/>
    <property type="match status" value="1"/>
</dbReference>
<dbReference type="FunFam" id="2.20.110.10:FF:000031">
    <property type="entry name" value="Phosphatidylinositol 4-phosphate 5-kinase"/>
    <property type="match status" value="1"/>
</dbReference>
<dbReference type="FunFam" id="3.30.800.10:FF:000003">
    <property type="entry name" value="Phosphatidylinositol 4-phosphate 5-kinase"/>
    <property type="match status" value="1"/>
</dbReference>
<dbReference type="FunFam" id="3.30.810.10:FF:000007">
    <property type="entry name" value="Phosphatidylinositol 4-phosphate 5-kinase"/>
    <property type="match status" value="1"/>
</dbReference>
<dbReference type="Gene3D" id="3.30.810.10">
    <property type="entry name" value="2-Layer Sandwich"/>
    <property type="match status" value="2"/>
</dbReference>
<dbReference type="Gene3D" id="2.20.110.10">
    <property type="entry name" value="Histone H3 K4-specific methyltransferase SET7/9 N-terminal domain"/>
    <property type="match status" value="3"/>
</dbReference>
<dbReference type="Gene3D" id="3.30.800.10">
    <property type="entry name" value="Phosphatidylinositol Phosphate Kinase II Beta"/>
    <property type="match status" value="1"/>
</dbReference>
<dbReference type="InterPro" id="IPR003409">
    <property type="entry name" value="MORN"/>
</dbReference>
<dbReference type="InterPro" id="IPR017163">
    <property type="entry name" value="PIno-4-P-5_kinase_pln"/>
</dbReference>
<dbReference type="InterPro" id="IPR027483">
    <property type="entry name" value="PInositol-4-P-4/5-kinase_C_sf"/>
</dbReference>
<dbReference type="InterPro" id="IPR002498">
    <property type="entry name" value="PInositol-4-P-4/5-kinase_core"/>
</dbReference>
<dbReference type="InterPro" id="IPR027484">
    <property type="entry name" value="PInositol-4-P-5-kinase_N"/>
</dbReference>
<dbReference type="InterPro" id="IPR023610">
    <property type="entry name" value="PInositol-4/5-P-5/4-kinase"/>
</dbReference>
<dbReference type="PANTHER" id="PTHR23086:SF94">
    <property type="entry name" value="PHOSPHATIDYLINOSITOL 4-PHOSPHATE 5-KINASE 5"/>
    <property type="match status" value="1"/>
</dbReference>
<dbReference type="PANTHER" id="PTHR23086">
    <property type="entry name" value="PHOSPHATIDYLINOSITOL-4-PHOSPHATE 5-KINASE"/>
    <property type="match status" value="1"/>
</dbReference>
<dbReference type="Pfam" id="PF02493">
    <property type="entry name" value="MORN"/>
    <property type="match status" value="8"/>
</dbReference>
<dbReference type="Pfam" id="PF01504">
    <property type="entry name" value="PIP5K"/>
    <property type="match status" value="1"/>
</dbReference>
<dbReference type="PIRSF" id="PIRSF037274">
    <property type="entry name" value="PIP5K_plant_prd"/>
    <property type="match status" value="1"/>
</dbReference>
<dbReference type="SMART" id="SM00698">
    <property type="entry name" value="MORN"/>
    <property type="match status" value="7"/>
</dbReference>
<dbReference type="SMART" id="SM00330">
    <property type="entry name" value="PIPKc"/>
    <property type="match status" value="1"/>
</dbReference>
<dbReference type="SUPFAM" id="SSF82185">
    <property type="entry name" value="Histone H3 K4-specific methyltransferase SET7/9 N-terminal domain"/>
    <property type="match status" value="1"/>
</dbReference>
<dbReference type="SUPFAM" id="SSF56104">
    <property type="entry name" value="SAICAR synthase-like"/>
    <property type="match status" value="1"/>
</dbReference>
<dbReference type="PROSITE" id="PS51455">
    <property type="entry name" value="PIPK"/>
    <property type="match status" value="1"/>
</dbReference>
<gene>
    <name type="primary">PIP5K5</name>
    <name type="ordered locus">At2g41210</name>
    <name type="ORF">T3K9.2</name>
</gene>
<comment type="catalytic activity">
    <reaction>
        <text>a 1,2-diacyl-sn-glycero-3-phospho-(1D-myo-inositol 4-phosphate) + ATP = a 1,2-diacyl-sn-glycero-3-phospho-(1D-myo-inositol-4,5-bisphosphate) + ADP + H(+)</text>
        <dbReference type="Rhea" id="RHEA:14425"/>
        <dbReference type="ChEBI" id="CHEBI:15378"/>
        <dbReference type="ChEBI" id="CHEBI:30616"/>
        <dbReference type="ChEBI" id="CHEBI:58178"/>
        <dbReference type="ChEBI" id="CHEBI:58456"/>
        <dbReference type="ChEBI" id="CHEBI:456216"/>
        <dbReference type="EC" id="2.7.1.68"/>
    </reaction>
</comment>
<proteinExistence type="evidence at transcript level"/>